<proteinExistence type="evidence at protein level"/>
<comment type="function">
    <text evidence="1 2 3 5">Shows mast cell degranulation and antimicrobial activities against the Gram-negative bacteria E.coli ATCC 25922 (MIC=6.0 ug/ml), the Gram-positive bacteria S.aureus ATCC 2592 (MIC=3.0 ug/ml) and the fungus C.albicans ATCC 2002 (MIC=12 ug/ml) (PubMed:17046111). Exhibits little hemolytic activity against washed human erythrocytes (By similarity). Its mast cell degranulation activity may be related to the activation of G-protein coupled receptors in mast cells as well as interaction with other proteins located in cell endosomal membranes in the mast cells (By similarity).</text>
</comment>
<comment type="subcellular location">
    <subcellularLocation>
        <location evidence="5">Secreted</location>
    </subcellularLocation>
</comment>
<comment type="tissue specificity">
    <text evidence="8">Expressed by the venom gland.</text>
</comment>
<comment type="mass spectrometry"/>
<comment type="miscellaneous">
    <text evidence="7">The primary structure of this mature peptide is identical to that of Mastoparan-VT1 from Vespa tropica (AC P0DQZ4), and mastoparan-M from Vespa mandarinia (AC P04205).</text>
</comment>
<comment type="similarity">
    <text evidence="7">Belongs to the MCD family. Mastoparan subfamily.</text>
</comment>
<reference key="1">
    <citation type="journal article" date="2006" name="Peptides">
        <title>The mastoparanogen from wasp.</title>
        <authorList>
            <person name="Xu X."/>
            <person name="Yang H."/>
            <person name="Yu H."/>
            <person name="Li J."/>
            <person name="Lai R."/>
        </authorList>
    </citation>
    <scope>NUCLEOTIDE SEQUENCE [MRNA]</scope>
    <scope>PROTEIN SEQUENCE OF 26-39</scope>
    <scope>FUNCTION</scope>
    <scope>AMIDATION AT LEU-39</scope>
    <scope>SUBCELLULAR LOCATION</scope>
    <scope>MASS SPECTROMETRY</scope>
    <source>
        <tissue>Venom</tissue>
        <tissue>Venom gland</tissue>
    </source>
</reference>
<accession>A0SPI0</accession>
<organism>
    <name type="scientific">Vespa magnifica</name>
    <name type="common">Hornet</name>
    <dbReference type="NCBI Taxonomy" id="202807"/>
    <lineage>
        <taxon>Eukaryota</taxon>
        <taxon>Metazoa</taxon>
        <taxon>Ecdysozoa</taxon>
        <taxon>Arthropoda</taxon>
        <taxon>Hexapoda</taxon>
        <taxon>Insecta</taxon>
        <taxon>Pterygota</taxon>
        <taxon>Neoptera</taxon>
        <taxon>Endopterygota</taxon>
        <taxon>Hymenoptera</taxon>
        <taxon>Apocrita</taxon>
        <taxon>Aculeata</taxon>
        <taxon>Vespoidea</taxon>
        <taxon>Vespidae</taxon>
        <taxon>Vespinae</taxon>
        <taxon>Vespa</taxon>
    </lineage>
</organism>
<evidence type="ECO:0000250" key="1">
    <source>
        <dbReference type="UniProtKB" id="P01514"/>
    </source>
</evidence>
<evidence type="ECO:0000250" key="2">
    <source>
        <dbReference type="UniProtKB" id="P0DQZ4"/>
    </source>
</evidence>
<evidence type="ECO:0000250" key="3">
    <source>
        <dbReference type="UniProtKB" id="P84914"/>
    </source>
</evidence>
<evidence type="ECO:0000256" key="4">
    <source>
        <dbReference type="SAM" id="MobiDB-lite"/>
    </source>
</evidence>
<evidence type="ECO:0000269" key="5">
    <source>
    </source>
</evidence>
<evidence type="ECO:0000303" key="6">
    <source>
    </source>
</evidence>
<evidence type="ECO:0000305" key="7"/>
<evidence type="ECO:0000305" key="8">
    <source>
    </source>
</evidence>
<keyword id="KW-0027">Amidation</keyword>
<keyword id="KW-0044">Antibiotic</keyword>
<keyword id="KW-0929">Antimicrobial</keyword>
<keyword id="KW-0903">Direct protein sequencing</keyword>
<keyword id="KW-0295">Fungicide</keyword>
<keyword id="KW-1213">G-protein coupled receptor impairing toxin</keyword>
<keyword id="KW-0391">Immunity</keyword>
<keyword id="KW-0399">Innate immunity</keyword>
<keyword id="KW-0467">Mast cell degranulation</keyword>
<keyword id="KW-0677">Repeat</keyword>
<keyword id="KW-0964">Secreted</keyword>
<keyword id="KW-0732">Signal</keyword>
<keyword id="KW-0800">Toxin</keyword>
<sequence>MSAEALADPKADPLAGPNPDADPEAINLKAIAALAKKLLG</sequence>
<dbReference type="EMBL" id="DQ865260">
    <property type="protein sequence ID" value="ABI94579.1"/>
    <property type="molecule type" value="mRNA"/>
</dbReference>
<dbReference type="GO" id="GO:0005576">
    <property type="term" value="C:extracellular region"/>
    <property type="evidence" value="ECO:0007669"/>
    <property type="project" value="UniProtKB-SubCell"/>
</dbReference>
<dbReference type="GO" id="GO:0090729">
    <property type="term" value="F:toxin activity"/>
    <property type="evidence" value="ECO:0007669"/>
    <property type="project" value="UniProtKB-KW"/>
</dbReference>
<dbReference type="GO" id="GO:0042742">
    <property type="term" value="P:defense response to bacterium"/>
    <property type="evidence" value="ECO:0007669"/>
    <property type="project" value="UniProtKB-KW"/>
</dbReference>
<dbReference type="GO" id="GO:0050832">
    <property type="term" value="P:defense response to fungus"/>
    <property type="evidence" value="ECO:0007669"/>
    <property type="project" value="UniProtKB-KW"/>
</dbReference>
<dbReference type="GO" id="GO:0045087">
    <property type="term" value="P:innate immune response"/>
    <property type="evidence" value="ECO:0007669"/>
    <property type="project" value="UniProtKB-KW"/>
</dbReference>
<dbReference type="GO" id="GO:0031640">
    <property type="term" value="P:killing of cells of another organism"/>
    <property type="evidence" value="ECO:0007669"/>
    <property type="project" value="UniProtKB-KW"/>
</dbReference>
<dbReference type="InterPro" id="IPR013213">
    <property type="entry name" value="Mastoparan"/>
</dbReference>
<dbReference type="Pfam" id="PF08249">
    <property type="entry name" value="Mastoparan"/>
    <property type="match status" value="1"/>
</dbReference>
<protein>
    <recommendedName>
        <fullName evidence="6">Mastoparan-like peptide 12c</fullName>
    </recommendedName>
</protein>
<feature type="signal peptide" evidence="2">
    <location>
        <begin position="1" status="less than"/>
        <end position="7"/>
    </location>
</feature>
<feature type="propeptide" id="PRO_0000458817" evidence="2">
    <location>
        <begin position="8"/>
        <end position="25"/>
    </location>
</feature>
<feature type="peptide" id="PRO_0000305121" description="Mastoparan-like peptide 12c" evidence="5">
    <location>
        <begin position="26"/>
        <end position="39"/>
    </location>
</feature>
<feature type="repeat" description="AXPX 1" evidence="7">
    <location>
        <begin position="7"/>
        <end position="10"/>
    </location>
</feature>
<feature type="repeat" description="AXPX 2" evidence="7">
    <location>
        <begin position="11"/>
        <end position="14"/>
    </location>
</feature>
<feature type="repeat" description="AXPX 3" evidence="7">
    <location>
        <begin position="15"/>
        <end position="18"/>
    </location>
</feature>
<feature type="repeat" description="AXPX 4" evidence="7">
    <location>
        <begin position="19"/>
        <end position="22"/>
    </location>
</feature>
<feature type="region of interest" description="Disordered" evidence="4">
    <location>
        <begin position="1"/>
        <end position="22"/>
    </location>
</feature>
<feature type="modified residue" description="Leucine amide" evidence="5">
    <location>
        <position position="39"/>
    </location>
</feature>
<feature type="non-terminal residue" evidence="7">
    <location>
        <position position="1"/>
    </location>
</feature>
<name>MASTC_VESMG</name>